<evidence type="ECO:0000255" key="1">
    <source>
        <dbReference type="HAMAP-Rule" id="MF_01422"/>
    </source>
</evidence>
<evidence type="ECO:0000256" key="2">
    <source>
        <dbReference type="SAM" id="MobiDB-lite"/>
    </source>
</evidence>
<feature type="signal peptide" evidence="1">
    <location>
        <begin position="1"/>
        <end position="32"/>
    </location>
</feature>
<feature type="chain" id="PRO_5000485858" description="Multidrug resistance protein MdtA">
    <location>
        <begin position="33"/>
        <end position="413"/>
    </location>
</feature>
<feature type="region of interest" description="Disordered" evidence="2">
    <location>
        <begin position="32"/>
        <end position="59"/>
    </location>
</feature>
<feature type="compositionally biased region" description="Polar residues" evidence="2">
    <location>
        <begin position="32"/>
        <end position="46"/>
    </location>
</feature>
<gene>
    <name evidence="1" type="primary">mdtA</name>
    <name type="ordered locus">PC1_2966</name>
</gene>
<keyword id="KW-0997">Cell inner membrane</keyword>
<keyword id="KW-1003">Cell membrane</keyword>
<keyword id="KW-0472">Membrane</keyword>
<keyword id="KW-0732">Signal</keyword>
<keyword id="KW-0813">Transport</keyword>
<accession>C6DBC6</accession>
<organism>
    <name type="scientific">Pectobacterium carotovorum subsp. carotovorum (strain PC1)</name>
    <dbReference type="NCBI Taxonomy" id="561230"/>
    <lineage>
        <taxon>Bacteria</taxon>
        <taxon>Pseudomonadati</taxon>
        <taxon>Pseudomonadota</taxon>
        <taxon>Gammaproteobacteria</taxon>
        <taxon>Enterobacterales</taxon>
        <taxon>Pectobacteriaceae</taxon>
        <taxon>Pectobacterium</taxon>
    </lineage>
</organism>
<proteinExistence type="inferred from homology"/>
<sequence>MNAKRIRGLLIFAAVIAIAVLIWRHFTQTSPAAPGTSEQHAARTSHSGNNSSGNGGGRRAAMRTLAPVQAAVTQSASVPYYLSGLGTVTSANTVTLRSRVNGQLMALHFQEGQQVKAGDLLAEIDPRPFQVELTQAQGQLAKDRAVLANAQQDLARYQQLVKTNLISRQELDAQTAAVRQAEGTLKADEGAVASAQLQLDYSKITAPISGRIGLKQVDVGNYITSGDTNGIVVITQTYPIDVVFTVPEAEISTILNAQKSGQPPMVEAWDRANQKKLSQGTLLSMDNQIDATTGTIKLKARFDNLDDALFPNQFVNIRMKVDTLKNAVVAPSAAVQMGNEGRFVWILNDKNEVSKRQVTTSIQYGQLVVVTAGLDADVKVVTDGIDRLTEGAKVEVVPSALTEKTPAIAGEKS</sequence>
<dbReference type="EMBL" id="CP001657">
    <property type="protein sequence ID" value="ACT13989.1"/>
    <property type="molecule type" value="Genomic_DNA"/>
</dbReference>
<dbReference type="RefSeq" id="WP_015841144.1">
    <property type="nucleotide sequence ID" value="NC_012917.1"/>
</dbReference>
<dbReference type="SMR" id="C6DBC6"/>
<dbReference type="STRING" id="561230.PC1_2966"/>
<dbReference type="KEGG" id="pct:PC1_2966"/>
<dbReference type="eggNOG" id="COG0845">
    <property type="taxonomic scope" value="Bacteria"/>
</dbReference>
<dbReference type="HOGENOM" id="CLU_018816_2_0_6"/>
<dbReference type="OrthoDB" id="9783047at2"/>
<dbReference type="Proteomes" id="UP000002736">
    <property type="component" value="Chromosome"/>
</dbReference>
<dbReference type="GO" id="GO:1990281">
    <property type="term" value="C:efflux pump complex"/>
    <property type="evidence" value="ECO:0007669"/>
    <property type="project" value="TreeGrafter"/>
</dbReference>
<dbReference type="GO" id="GO:0005886">
    <property type="term" value="C:plasma membrane"/>
    <property type="evidence" value="ECO:0007669"/>
    <property type="project" value="UniProtKB-SubCell"/>
</dbReference>
<dbReference type="GO" id="GO:0015562">
    <property type="term" value="F:efflux transmembrane transporter activity"/>
    <property type="evidence" value="ECO:0007669"/>
    <property type="project" value="TreeGrafter"/>
</dbReference>
<dbReference type="FunFam" id="2.40.420.20:FF:000001">
    <property type="entry name" value="Efflux RND transporter periplasmic adaptor subunit"/>
    <property type="match status" value="1"/>
</dbReference>
<dbReference type="FunFam" id="1.10.287.470:FF:000005">
    <property type="entry name" value="Multidrug resistance protein MdtA"/>
    <property type="match status" value="1"/>
</dbReference>
<dbReference type="FunFam" id="2.40.30.170:FF:000006">
    <property type="entry name" value="Multidrug resistance protein MdtA"/>
    <property type="match status" value="1"/>
</dbReference>
<dbReference type="Gene3D" id="2.40.30.170">
    <property type="match status" value="1"/>
</dbReference>
<dbReference type="Gene3D" id="2.40.420.20">
    <property type="match status" value="1"/>
</dbReference>
<dbReference type="Gene3D" id="2.40.50.100">
    <property type="match status" value="1"/>
</dbReference>
<dbReference type="Gene3D" id="1.10.287.470">
    <property type="entry name" value="Helix hairpin bin"/>
    <property type="match status" value="1"/>
</dbReference>
<dbReference type="HAMAP" id="MF_01422">
    <property type="entry name" value="MdtA"/>
    <property type="match status" value="1"/>
</dbReference>
<dbReference type="InterPro" id="IPR032317">
    <property type="entry name" value="CusB_D23"/>
</dbReference>
<dbReference type="InterPro" id="IPR022824">
    <property type="entry name" value="Multidrug-R_MdtA"/>
</dbReference>
<dbReference type="InterPro" id="IPR006143">
    <property type="entry name" value="RND_pump_MFP"/>
</dbReference>
<dbReference type="NCBIfam" id="NF008589">
    <property type="entry name" value="PRK11556.1"/>
    <property type="match status" value="1"/>
</dbReference>
<dbReference type="NCBIfam" id="TIGR01730">
    <property type="entry name" value="RND_mfp"/>
    <property type="match status" value="1"/>
</dbReference>
<dbReference type="PANTHER" id="PTHR30469">
    <property type="entry name" value="MULTIDRUG RESISTANCE PROTEIN MDTA"/>
    <property type="match status" value="1"/>
</dbReference>
<dbReference type="PANTHER" id="PTHR30469:SF12">
    <property type="entry name" value="MULTIDRUG RESISTANCE PROTEIN MDTA"/>
    <property type="match status" value="1"/>
</dbReference>
<dbReference type="Pfam" id="PF16576">
    <property type="entry name" value="HlyD_D23"/>
    <property type="match status" value="1"/>
</dbReference>
<dbReference type="SUPFAM" id="SSF111369">
    <property type="entry name" value="HlyD-like secretion proteins"/>
    <property type="match status" value="1"/>
</dbReference>
<protein>
    <recommendedName>
        <fullName evidence="1">Multidrug resistance protein MdtA</fullName>
    </recommendedName>
    <alternativeName>
        <fullName evidence="1">Multidrug transporter MdtA</fullName>
    </alternativeName>
</protein>
<comment type="subunit">
    <text evidence="1">Part of a tripartite efflux system composed of MdtA, MdtB and MdtC.</text>
</comment>
<comment type="subcellular location">
    <subcellularLocation>
        <location evidence="1">Cell inner membrane</location>
        <topology evidence="1">Peripheral membrane protein</topology>
    </subcellularLocation>
</comment>
<comment type="similarity">
    <text evidence="1">Belongs to the membrane fusion protein (MFP) (TC 8.A.1) family.</text>
</comment>
<reference key="1">
    <citation type="submission" date="2009-07" db="EMBL/GenBank/DDBJ databases">
        <title>Complete sequence of Pectobacterium carotovorum subsp. carotovorum PC1.</title>
        <authorList>
            <consortium name="US DOE Joint Genome Institute"/>
            <person name="Lucas S."/>
            <person name="Copeland A."/>
            <person name="Lapidus A."/>
            <person name="Glavina del Rio T."/>
            <person name="Tice H."/>
            <person name="Bruce D."/>
            <person name="Goodwin L."/>
            <person name="Pitluck S."/>
            <person name="Munk A.C."/>
            <person name="Brettin T."/>
            <person name="Detter J.C."/>
            <person name="Han C."/>
            <person name="Tapia R."/>
            <person name="Larimer F."/>
            <person name="Land M."/>
            <person name="Hauser L."/>
            <person name="Kyrpides N."/>
            <person name="Mikhailova N."/>
            <person name="Balakrishnan V."/>
            <person name="Glasner J."/>
            <person name="Perna N.T."/>
        </authorList>
    </citation>
    <scope>NUCLEOTIDE SEQUENCE [LARGE SCALE GENOMIC DNA]</scope>
    <source>
        <strain>PC1</strain>
    </source>
</reference>
<name>MDTA_PECCP</name>